<name>UBIE_SHEB5</name>
<organism>
    <name type="scientific">Shewanella baltica (strain OS155 / ATCC BAA-1091)</name>
    <dbReference type="NCBI Taxonomy" id="325240"/>
    <lineage>
        <taxon>Bacteria</taxon>
        <taxon>Pseudomonadati</taxon>
        <taxon>Pseudomonadota</taxon>
        <taxon>Gammaproteobacteria</taxon>
        <taxon>Alteromonadales</taxon>
        <taxon>Shewanellaceae</taxon>
        <taxon>Shewanella</taxon>
    </lineage>
</organism>
<accession>A3D9F2</accession>
<gene>
    <name evidence="1" type="primary">ubiE</name>
    <name type="ordered locus">Sbal_3895</name>
</gene>
<comment type="function">
    <text evidence="1">Methyltransferase required for the conversion of demethylmenaquinol (DMKH2) to menaquinol (MKH2) and the conversion of 2-polyprenyl-6-methoxy-1,4-benzoquinol (DDMQH2) to 2-polyprenyl-3-methyl-6-methoxy-1,4-benzoquinol (DMQH2).</text>
</comment>
<comment type="catalytic activity">
    <reaction evidence="1">
        <text>a 2-demethylmenaquinol + S-adenosyl-L-methionine = a menaquinol + S-adenosyl-L-homocysteine + H(+)</text>
        <dbReference type="Rhea" id="RHEA:42640"/>
        <dbReference type="Rhea" id="RHEA-COMP:9539"/>
        <dbReference type="Rhea" id="RHEA-COMP:9563"/>
        <dbReference type="ChEBI" id="CHEBI:15378"/>
        <dbReference type="ChEBI" id="CHEBI:18151"/>
        <dbReference type="ChEBI" id="CHEBI:55437"/>
        <dbReference type="ChEBI" id="CHEBI:57856"/>
        <dbReference type="ChEBI" id="CHEBI:59789"/>
        <dbReference type="EC" id="2.1.1.163"/>
    </reaction>
</comment>
<comment type="catalytic activity">
    <reaction evidence="1">
        <text>a 2-methoxy-6-(all-trans-polyprenyl)benzene-1,4-diol + S-adenosyl-L-methionine = a 5-methoxy-2-methyl-3-(all-trans-polyprenyl)benzene-1,4-diol + S-adenosyl-L-homocysteine + H(+)</text>
        <dbReference type="Rhea" id="RHEA:28286"/>
        <dbReference type="Rhea" id="RHEA-COMP:10858"/>
        <dbReference type="Rhea" id="RHEA-COMP:10859"/>
        <dbReference type="ChEBI" id="CHEBI:15378"/>
        <dbReference type="ChEBI" id="CHEBI:57856"/>
        <dbReference type="ChEBI" id="CHEBI:59789"/>
        <dbReference type="ChEBI" id="CHEBI:84166"/>
        <dbReference type="ChEBI" id="CHEBI:84167"/>
        <dbReference type="EC" id="2.1.1.201"/>
    </reaction>
</comment>
<comment type="pathway">
    <text evidence="1">Quinol/quinone metabolism; menaquinone biosynthesis; menaquinol from 1,4-dihydroxy-2-naphthoate: step 2/2.</text>
</comment>
<comment type="pathway">
    <text evidence="1">Cofactor biosynthesis; ubiquinone biosynthesis.</text>
</comment>
<comment type="similarity">
    <text evidence="1">Belongs to the class I-like SAM-binding methyltransferase superfamily. MenG/UbiE family.</text>
</comment>
<reference key="1">
    <citation type="submission" date="2007-02" db="EMBL/GenBank/DDBJ databases">
        <title>Complete sequence of chromosome of Shewanella baltica OS155.</title>
        <authorList>
            <consortium name="US DOE Joint Genome Institute"/>
            <person name="Copeland A."/>
            <person name="Lucas S."/>
            <person name="Lapidus A."/>
            <person name="Barry K."/>
            <person name="Detter J.C."/>
            <person name="Glavina del Rio T."/>
            <person name="Hammon N."/>
            <person name="Israni S."/>
            <person name="Dalin E."/>
            <person name="Tice H."/>
            <person name="Pitluck S."/>
            <person name="Sims D.R."/>
            <person name="Brettin T."/>
            <person name="Bruce D."/>
            <person name="Han C."/>
            <person name="Tapia R."/>
            <person name="Brainard J."/>
            <person name="Schmutz J."/>
            <person name="Larimer F."/>
            <person name="Land M."/>
            <person name="Hauser L."/>
            <person name="Kyrpides N."/>
            <person name="Mikhailova N."/>
            <person name="Brettar I."/>
            <person name="Klappenbach J."/>
            <person name="Konstantinidis K."/>
            <person name="Rodrigues J."/>
            <person name="Tiedje J."/>
            <person name="Richardson P."/>
        </authorList>
    </citation>
    <scope>NUCLEOTIDE SEQUENCE [LARGE SCALE GENOMIC DNA]</scope>
    <source>
        <strain>OS155 / ATCC BAA-1091</strain>
    </source>
</reference>
<protein>
    <recommendedName>
        <fullName evidence="1">Ubiquinone/menaquinone biosynthesis C-methyltransferase UbiE</fullName>
        <ecNumber evidence="1">2.1.1.163</ecNumber>
        <ecNumber evidence="1">2.1.1.201</ecNumber>
    </recommendedName>
    <alternativeName>
        <fullName evidence="1">2-methoxy-6-polyprenyl-1,4-benzoquinol methylase</fullName>
    </alternativeName>
    <alternativeName>
        <fullName evidence="1">Demethylmenaquinone methyltransferase</fullName>
    </alternativeName>
</protein>
<proteinExistence type="inferred from homology"/>
<sequence>MSEGESKSTHFGYKTVEADKKAELVAGVFHSVAAKYDIMNDVMSFGIHRFWKRYTIEVSGARPGMKVLDLAGGTGDLTAKFSHLVGDKGEVVLADINDSMLKVGRTKLRDKGIVNNVSYVQANAEALPFPDNHFDIITIAFGLRNVTDKDAALRSMNRVLKPGGKLLVLEFSKPQHEIMRKVYDLYSFKVLPKMGELITKDADSYEYLAESIRMHPDQDTLKQMMVDAGFEQVDYTNMTDGIVALHRGYKF</sequence>
<feature type="chain" id="PRO_1000056293" description="Ubiquinone/menaquinone biosynthesis C-methyltransferase UbiE">
    <location>
        <begin position="1"/>
        <end position="251"/>
    </location>
</feature>
<feature type="binding site" evidence="1">
    <location>
        <position position="74"/>
    </location>
    <ligand>
        <name>S-adenosyl-L-methionine</name>
        <dbReference type="ChEBI" id="CHEBI:59789"/>
    </ligand>
</feature>
<feature type="binding site" evidence="1">
    <location>
        <position position="95"/>
    </location>
    <ligand>
        <name>S-adenosyl-L-methionine</name>
        <dbReference type="ChEBI" id="CHEBI:59789"/>
    </ligand>
</feature>
<feature type="binding site" evidence="1">
    <location>
        <begin position="123"/>
        <end position="124"/>
    </location>
    <ligand>
        <name>S-adenosyl-L-methionine</name>
        <dbReference type="ChEBI" id="CHEBI:59789"/>
    </ligand>
</feature>
<evidence type="ECO:0000255" key="1">
    <source>
        <dbReference type="HAMAP-Rule" id="MF_01813"/>
    </source>
</evidence>
<keyword id="KW-0474">Menaquinone biosynthesis</keyword>
<keyword id="KW-0489">Methyltransferase</keyword>
<keyword id="KW-1185">Reference proteome</keyword>
<keyword id="KW-0949">S-adenosyl-L-methionine</keyword>
<keyword id="KW-0808">Transferase</keyword>
<keyword id="KW-0831">Ubiquinone biosynthesis</keyword>
<dbReference type="EC" id="2.1.1.163" evidence="1"/>
<dbReference type="EC" id="2.1.1.201" evidence="1"/>
<dbReference type="EMBL" id="CP000563">
    <property type="protein sequence ID" value="ABN63365.1"/>
    <property type="molecule type" value="Genomic_DNA"/>
</dbReference>
<dbReference type="RefSeq" id="WP_006083326.1">
    <property type="nucleotide sequence ID" value="NC_009052.1"/>
</dbReference>
<dbReference type="SMR" id="A3D9F2"/>
<dbReference type="STRING" id="325240.Sbal_3895"/>
<dbReference type="GeneID" id="11774543"/>
<dbReference type="KEGG" id="sbl:Sbal_3895"/>
<dbReference type="HOGENOM" id="CLU_037990_0_0_6"/>
<dbReference type="OrthoDB" id="9808140at2"/>
<dbReference type="UniPathway" id="UPA00079">
    <property type="reaction ID" value="UER00169"/>
</dbReference>
<dbReference type="UniPathway" id="UPA00232"/>
<dbReference type="Proteomes" id="UP000001557">
    <property type="component" value="Chromosome"/>
</dbReference>
<dbReference type="GO" id="GO:0008425">
    <property type="term" value="F:2-methoxy-6-polyprenyl-1,4-benzoquinol methyltransferase activity"/>
    <property type="evidence" value="ECO:0007669"/>
    <property type="project" value="UniProtKB-UniRule"/>
</dbReference>
<dbReference type="GO" id="GO:0043770">
    <property type="term" value="F:demethylmenaquinone methyltransferase activity"/>
    <property type="evidence" value="ECO:0007669"/>
    <property type="project" value="UniProtKB-UniRule"/>
</dbReference>
<dbReference type="GO" id="GO:0009060">
    <property type="term" value="P:aerobic respiration"/>
    <property type="evidence" value="ECO:0007669"/>
    <property type="project" value="UniProtKB-UniRule"/>
</dbReference>
<dbReference type="GO" id="GO:0009234">
    <property type="term" value="P:menaquinone biosynthetic process"/>
    <property type="evidence" value="ECO:0007669"/>
    <property type="project" value="UniProtKB-UniRule"/>
</dbReference>
<dbReference type="GO" id="GO:0032259">
    <property type="term" value="P:methylation"/>
    <property type="evidence" value="ECO:0007669"/>
    <property type="project" value="UniProtKB-KW"/>
</dbReference>
<dbReference type="CDD" id="cd02440">
    <property type="entry name" value="AdoMet_MTases"/>
    <property type="match status" value="1"/>
</dbReference>
<dbReference type="FunFam" id="3.40.50.150:FF:000014">
    <property type="entry name" value="Ubiquinone/menaquinone biosynthesis C-methyltransferase UbiE"/>
    <property type="match status" value="1"/>
</dbReference>
<dbReference type="Gene3D" id="3.40.50.150">
    <property type="entry name" value="Vaccinia Virus protein VP39"/>
    <property type="match status" value="1"/>
</dbReference>
<dbReference type="HAMAP" id="MF_01813">
    <property type="entry name" value="MenG_UbiE_methyltr"/>
    <property type="match status" value="1"/>
</dbReference>
<dbReference type="InterPro" id="IPR029063">
    <property type="entry name" value="SAM-dependent_MTases_sf"/>
</dbReference>
<dbReference type="InterPro" id="IPR004033">
    <property type="entry name" value="UbiE/COQ5_MeTrFase"/>
</dbReference>
<dbReference type="InterPro" id="IPR023576">
    <property type="entry name" value="UbiE/COQ5_MeTrFase_CS"/>
</dbReference>
<dbReference type="NCBIfam" id="TIGR01934">
    <property type="entry name" value="MenG_MenH_UbiE"/>
    <property type="match status" value="1"/>
</dbReference>
<dbReference type="NCBIfam" id="NF001240">
    <property type="entry name" value="PRK00216.1-1"/>
    <property type="match status" value="1"/>
</dbReference>
<dbReference type="NCBIfam" id="NF001242">
    <property type="entry name" value="PRK00216.1-3"/>
    <property type="match status" value="1"/>
</dbReference>
<dbReference type="NCBIfam" id="NF001244">
    <property type="entry name" value="PRK00216.1-5"/>
    <property type="match status" value="1"/>
</dbReference>
<dbReference type="PANTHER" id="PTHR43591:SF24">
    <property type="entry name" value="2-METHOXY-6-POLYPRENYL-1,4-BENZOQUINOL METHYLASE, MITOCHONDRIAL"/>
    <property type="match status" value="1"/>
</dbReference>
<dbReference type="PANTHER" id="PTHR43591">
    <property type="entry name" value="METHYLTRANSFERASE"/>
    <property type="match status" value="1"/>
</dbReference>
<dbReference type="Pfam" id="PF01209">
    <property type="entry name" value="Ubie_methyltran"/>
    <property type="match status" value="1"/>
</dbReference>
<dbReference type="SUPFAM" id="SSF53335">
    <property type="entry name" value="S-adenosyl-L-methionine-dependent methyltransferases"/>
    <property type="match status" value="1"/>
</dbReference>
<dbReference type="PROSITE" id="PS51608">
    <property type="entry name" value="SAM_MT_UBIE"/>
    <property type="match status" value="1"/>
</dbReference>
<dbReference type="PROSITE" id="PS01183">
    <property type="entry name" value="UBIE_1"/>
    <property type="match status" value="1"/>
</dbReference>
<dbReference type="PROSITE" id="PS01184">
    <property type="entry name" value="UBIE_2"/>
    <property type="match status" value="1"/>
</dbReference>